<protein>
    <recommendedName>
        <fullName>Tetratricopeptide repeat protein 4</fullName>
        <shortName>TPR repeat protein 4</shortName>
    </recommendedName>
</protein>
<evidence type="ECO:0000250" key="1">
    <source>
        <dbReference type="UniProtKB" id="Q8R3H9"/>
    </source>
</evidence>
<evidence type="ECO:0000269" key="2">
    <source>
    </source>
</evidence>
<evidence type="ECO:0000269" key="3">
    <source>
    </source>
</evidence>
<evidence type="ECO:0000269" key="4">
    <source>
    </source>
</evidence>
<evidence type="ECO:0000269" key="5">
    <source>
    </source>
</evidence>
<evidence type="ECO:0000269" key="6">
    <source ref="2"/>
</evidence>
<evidence type="ECO:0000269" key="7">
    <source ref="4"/>
</evidence>
<evidence type="ECO:0000305" key="8"/>
<evidence type="ECO:0007744" key="9">
    <source>
    </source>
</evidence>
<evidence type="ECO:0007744" key="10">
    <source>
    </source>
</evidence>
<evidence type="ECO:0007744" key="11">
    <source>
    </source>
</evidence>
<evidence type="ECO:0007829" key="12">
    <source>
        <dbReference type="PDB" id="6HFO"/>
    </source>
</evidence>
<accession>O95801</accession>
<accession>Q53Y95</accession>
<accession>Q5TA96</accession>
<accession>Q9H3I2</accession>
<comment type="function">
    <text evidence="4 5">May act as a co-chaperone for HSP90AB1 (PubMed:18320024). Promotes Sendai virus (SeV)-induced host cell innate immune responses (PubMed:29251827).</text>
</comment>
<comment type="subunit">
    <text evidence="1 4 5">Interacts (via TPR repeats) with HSP90AB1 (PubMed:18320024). Interacts with HSPA8 and CDC6 (PubMed:18320024). Interacts with TBK1 (PubMed:29251827). Interacts with MSL1 (By similarity).</text>
</comment>
<comment type="interaction">
    <interactant intactId="EBI-1050890">
        <id>O95801</id>
    </interactant>
    <interactant intactId="EBI-6166333">
        <id>Q9BTY7</id>
        <label>HGH1</label>
    </interactant>
    <organismsDiffer>false</organismsDiffer>
    <experiments>4</experiments>
</comment>
<comment type="interaction">
    <interactant intactId="EBI-1050890">
        <id>O95801</id>
    </interactant>
    <interactant intactId="EBI-352572">
        <id>P08238</id>
        <label>HSP90AB1</label>
    </interactant>
    <organismsDiffer>false</organismsDiffer>
    <experiments>5</experiments>
</comment>
<comment type="interaction">
    <interactant intactId="EBI-1050890">
        <id>O95801</id>
    </interactant>
    <interactant intactId="EBI-1760638">
        <id>Q92966</id>
        <label>SNAPC3</label>
    </interactant>
    <organismsDiffer>false</organismsDiffer>
    <experiments>3</experiments>
</comment>
<comment type="interaction">
    <interactant intactId="EBI-1050890">
        <id>O95801</id>
    </interactant>
    <interactant intactId="EBI-356402">
        <id>Q9UHD2</id>
        <label>TBK1</label>
    </interactant>
    <organismsDiffer>false</organismsDiffer>
    <experiments>5</experiments>
</comment>
<comment type="subcellular location">
    <subcellularLocation>
        <location evidence="4 5">Nucleus</location>
    </subcellularLocation>
    <subcellularLocation>
        <location evidence="4">Nucleus</location>
        <location evidence="4">Nucleoplasm</location>
    </subcellularLocation>
    <subcellularLocation>
        <location evidence="5">Cytoplasm</location>
    </subcellularLocation>
    <text evidence="1">Predominantly nuclear in the G1 and S phases of cell cycle and is evenly distributed between the nucleus and cytoplasm in the G2 phase (By similarity). MSL1 can promote its nuclear localization (By similarity).</text>
</comment>
<comment type="tissue specificity">
    <text evidence="4">Highly expressed in proliferating tissue and tumor cell lines but not in normal cell lines.</text>
</comment>
<comment type="similarity">
    <text evidence="8">Belongs to the TTC4 family.</text>
</comment>
<comment type="sequence caution" evidence="8">
    <conflict type="frameshift">
        <sequence resource="EMBL-CDS" id="AAD19853"/>
    </conflict>
</comment>
<keyword id="KW-0002">3D-structure</keyword>
<keyword id="KW-0007">Acetylation</keyword>
<keyword id="KW-0051">Antiviral defense</keyword>
<keyword id="KW-0963">Cytoplasm</keyword>
<keyword id="KW-0391">Immunity</keyword>
<keyword id="KW-0399">Innate immunity</keyword>
<keyword id="KW-0539">Nucleus</keyword>
<keyword id="KW-0597">Phosphoprotein</keyword>
<keyword id="KW-1267">Proteomics identification</keyword>
<keyword id="KW-1185">Reference proteome</keyword>
<keyword id="KW-0677">Repeat</keyword>
<keyword id="KW-0802">TPR repeat</keyword>
<gene>
    <name type="primary">TTC4</name>
    <name type="ORF">My044</name>
</gene>
<organism>
    <name type="scientific">Homo sapiens</name>
    <name type="common">Human</name>
    <dbReference type="NCBI Taxonomy" id="9606"/>
    <lineage>
        <taxon>Eukaryota</taxon>
        <taxon>Metazoa</taxon>
        <taxon>Chordata</taxon>
        <taxon>Craniata</taxon>
        <taxon>Vertebrata</taxon>
        <taxon>Euteleostomi</taxon>
        <taxon>Mammalia</taxon>
        <taxon>Eutheria</taxon>
        <taxon>Euarchontoglires</taxon>
        <taxon>Primates</taxon>
        <taxon>Haplorrhini</taxon>
        <taxon>Catarrhini</taxon>
        <taxon>Hominidae</taxon>
        <taxon>Homo</taxon>
    </lineage>
</organism>
<feature type="chain" id="PRO_0000106379" description="Tetratricopeptide repeat protein 4">
    <location>
        <begin position="1"/>
        <end position="387"/>
    </location>
</feature>
<feature type="repeat" description="TPR 1">
    <location>
        <begin position="79"/>
        <end position="112"/>
    </location>
</feature>
<feature type="repeat" description="TPR 2">
    <location>
        <begin position="117"/>
        <end position="150"/>
    </location>
</feature>
<feature type="repeat" description="TPR 3">
    <location>
        <begin position="151"/>
        <end position="184"/>
    </location>
</feature>
<feature type="site" description="Essential for interaction with CDC6" evidence="4">
    <location>
        <position position="77"/>
    </location>
</feature>
<feature type="site" description="Essential for interaction with HSPA8" evidence="4">
    <location>
        <position position="152"/>
    </location>
</feature>
<feature type="site" description="Essential for interaction with HSPA8" evidence="4">
    <location>
        <position position="156"/>
    </location>
</feature>
<feature type="site" description="Essential for interaction with CDC6" evidence="4">
    <location>
        <position position="217"/>
    </location>
</feature>
<feature type="modified residue" description="N-acetylmethionine" evidence="10">
    <location>
        <position position="1"/>
    </location>
</feature>
<feature type="modified residue" description="Phosphoserine" evidence="11">
    <location>
        <position position="47"/>
    </location>
</feature>
<feature type="modified residue" description="Phosphoserine" evidence="11">
    <location>
        <position position="51"/>
    </location>
</feature>
<feature type="modified residue" description="Phosphoserine" evidence="9">
    <location>
        <position position="243"/>
    </location>
</feature>
<feature type="sequence variant" id="VAR_031713" description="In dbSNP:rs1147990." evidence="2 3 6 7">
    <original>S</original>
    <variation>T</variation>
    <location>
        <position position="47"/>
    </location>
</feature>
<feature type="mutagenesis site" description="No effect on interaction with HSPA8, HSP90AB1 and CDC6." evidence="4">
    <original>V</original>
    <variation>D</variation>
    <location>
        <position position="42"/>
    </location>
</feature>
<feature type="mutagenesis site" description="No effect on interaction with HSPA8, HSP90AB1 and CDC6." evidence="4">
    <original>I</original>
    <variation>M</variation>
    <location>
        <position position="67"/>
    </location>
</feature>
<feature type="mutagenesis site" description="No effect on interaction with HSPA8 and HSP90AB1. Loss of interaction with CDC6." evidence="4">
    <original>E</original>
    <variation>A</variation>
    <location>
        <position position="77"/>
    </location>
</feature>
<feature type="mutagenesis site" description="Loss of interaction with HSPA8." evidence="4">
    <original>K</original>
    <variation>E</variation>
    <location>
        <position position="152"/>
    </location>
</feature>
<feature type="mutagenesis site" description="Loss of interaction with HSPA8." evidence="4">
    <original>R</original>
    <variation>E</variation>
    <location>
        <position position="156"/>
    </location>
</feature>
<feature type="mutagenesis site" description="No effect on interaction with HSPA8 and HSP90AB1. Loss of interaction with CDC6." evidence="4">
    <original>N</original>
    <variation>K</variation>
    <location>
        <position position="217"/>
    </location>
</feature>
<feature type="sequence conflict" description="In Ref. 1; AAD19853." evidence="8" ref="1">
    <original>K</original>
    <variation>I</variation>
    <location>
        <position position="165"/>
    </location>
</feature>
<feature type="helix" evidence="12">
    <location>
        <begin position="221"/>
        <end position="228"/>
    </location>
</feature>
<feature type="turn" evidence="12">
    <location>
        <begin position="234"/>
        <end position="236"/>
    </location>
</feature>
<feature type="helix" evidence="12">
    <location>
        <begin position="248"/>
        <end position="257"/>
    </location>
</feature>
<feature type="strand" evidence="12">
    <location>
        <begin position="274"/>
        <end position="282"/>
    </location>
</feature>
<feature type="turn" evidence="12">
    <location>
        <begin position="283"/>
        <end position="286"/>
    </location>
</feature>
<feature type="strand" evidence="12">
    <location>
        <begin position="287"/>
        <end position="295"/>
    </location>
</feature>
<feature type="helix" evidence="12">
    <location>
        <begin position="300"/>
        <end position="307"/>
    </location>
</feature>
<feature type="helix" evidence="12">
    <location>
        <begin position="322"/>
        <end position="324"/>
    </location>
</feature>
<feature type="strand" evidence="12">
    <location>
        <begin position="325"/>
        <end position="331"/>
    </location>
</feature>
<feature type="turn" evidence="12">
    <location>
        <begin position="332"/>
        <end position="335"/>
    </location>
</feature>
<feature type="strand" evidence="12">
    <location>
        <begin position="336"/>
        <end position="340"/>
    </location>
</feature>
<feature type="helix" evidence="12">
    <location>
        <begin position="346"/>
        <end position="350"/>
    </location>
</feature>
<feature type="strand" evidence="12">
    <location>
        <begin position="356"/>
        <end position="358"/>
    </location>
</feature>
<feature type="strand" evidence="12">
    <location>
        <begin position="363"/>
        <end position="368"/>
    </location>
</feature>
<feature type="helix" evidence="12">
    <location>
        <begin position="372"/>
        <end position="377"/>
    </location>
</feature>
<feature type="turn" evidence="12">
    <location>
        <begin position="378"/>
        <end position="380"/>
    </location>
</feature>
<feature type="strand" evidence="12">
    <location>
        <begin position="382"/>
        <end position="385"/>
    </location>
</feature>
<dbReference type="EMBL" id="AF073887">
    <property type="protein sequence ID" value="AAD19853.1"/>
    <property type="status" value="ALT_FRAME"/>
    <property type="molecule type" value="mRNA"/>
</dbReference>
<dbReference type="EMBL" id="AF063602">
    <property type="protein sequence ID" value="AAG43161.1"/>
    <property type="molecule type" value="mRNA"/>
</dbReference>
<dbReference type="EMBL" id="AK292426">
    <property type="protein sequence ID" value="BAF85115.1"/>
    <property type="molecule type" value="mRNA"/>
</dbReference>
<dbReference type="EMBL" id="BT006817">
    <property type="protein sequence ID" value="AAP35463.1"/>
    <property type="molecule type" value="mRNA"/>
</dbReference>
<dbReference type="EMBL" id="AK222562">
    <property type="protein sequence ID" value="BAD96282.1"/>
    <property type="molecule type" value="mRNA"/>
</dbReference>
<dbReference type="EMBL" id="AL139244">
    <property type="status" value="NOT_ANNOTATED_CDS"/>
    <property type="molecule type" value="Genomic_DNA"/>
</dbReference>
<dbReference type="EMBL" id="CH471059">
    <property type="protein sequence ID" value="EAX06671.1"/>
    <property type="molecule type" value="Genomic_DNA"/>
</dbReference>
<dbReference type="EMBL" id="BC001276">
    <property type="protein sequence ID" value="AAH01276.1"/>
    <property type="molecule type" value="mRNA"/>
</dbReference>
<dbReference type="CCDS" id="CCDS596.1"/>
<dbReference type="RefSeq" id="NP_004614.3">
    <property type="nucleotide sequence ID" value="NM_004623.4"/>
</dbReference>
<dbReference type="PDB" id="6HFO">
    <property type="method" value="X-ray"/>
    <property type="resolution" value="1.65 A"/>
    <property type="chains" value="A=217-387"/>
</dbReference>
<dbReference type="PDBsum" id="6HFO"/>
<dbReference type="SMR" id="O95801"/>
<dbReference type="BioGRID" id="113119">
    <property type="interactions" value="138"/>
</dbReference>
<dbReference type="FunCoup" id="O95801">
    <property type="interactions" value="4289"/>
</dbReference>
<dbReference type="IntAct" id="O95801">
    <property type="interactions" value="50"/>
</dbReference>
<dbReference type="MINT" id="O95801"/>
<dbReference type="STRING" id="9606.ENSP00000360329"/>
<dbReference type="GlyGen" id="O95801">
    <property type="glycosylation" value="1 site, 1 O-linked glycan (1 site)"/>
</dbReference>
<dbReference type="iPTMnet" id="O95801"/>
<dbReference type="MetOSite" id="O95801"/>
<dbReference type="PhosphoSitePlus" id="O95801"/>
<dbReference type="BioMuta" id="TTC4"/>
<dbReference type="jPOST" id="O95801"/>
<dbReference type="MassIVE" id="O95801"/>
<dbReference type="PaxDb" id="9606-ENSP00000360329"/>
<dbReference type="PeptideAtlas" id="O95801"/>
<dbReference type="ProteomicsDB" id="51058"/>
<dbReference type="Pumba" id="O95801"/>
<dbReference type="Antibodypedia" id="34867">
    <property type="antibodies" value="84 antibodies from 19 providers"/>
</dbReference>
<dbReference type="DNASU" id="7268"/>
<dbReference type="Ensembl" id="ENST00000371281.4">
    <property type="protein sequence ID" value="ENSP00000360329.3"/>
    <property type="gene ID" value="ENSG00000243725.7"/>
</dbReference>
<dbReference type="GeneID" id="7268"/>
<dbReference type="KEGG" id="hsa:7268"/>
<dbReference type="MANE-Select" id="ENST00000371281.4">
    <property type="protein sequence ID" value="ENSP00000360329.3"/>
    <property type="RefSeq nucleotide sequence ID" value="NM_004623.5"/>
    <property type="RefSeq protein sequence ID" value="NP_004614.3"/>
</dbReference>
<dbReference type="UCSC" id="uc001cxx.5">
    <property type="organism name" value="human"/>
</dbReference>
<dbReference type="AGR" id="HGNC:12394"/>
<dbReference type="CTD" id="7268"/>
<dbReference type="DisGeNET" id="7268"/>
<dbReference type="GeneCards" id="TTC4"/>
<dbReference type="HGNC" id="HGNC:12394">
    <property type="gene designation" value="TTC4"/>
</dbReference>
<dbReference type="HPA" id="ENSG00000243725">
    <property type="expression patterns" value="Low tissue specificity"/>
</dbReference>
<dbReference type="MIM" id="606753">
    <property type="type" value="gene"/>
</dbReference>
<dbReference type="neXtProt" id="NX_O95801"/>
<dbReference type="OpenTargets" id="ENSG00000243725"/>
<dbReference type="PharmGKB" id="PA37059"/>
<dbReference type="VEuPathDB" id="HostDB:ENSG00000243725"/>
<dbReference type="eggNOG" id="KOG0551">
    <property type="taxonomic scope" value="Eukaryota"/>
</dbReference>
<dbReference type="GeneTree" id="ENSGT00510000049371"/>
<dbReference type="HOGENOM" id="CLU_040446_2_0_1"/>
<dbReference type="InParanoid" id="O95801"/>
<dbReference type="OMA" id="WRAAQCA"/>
<dbReference type="OrthoDB" id="420195at2759"/>
<dbReference type="PAN-GO" id="O95801">
    <property type="GO annotations" value="4 GO annotations based on evolutionary models"/>
</dbReference>
<dbReference type="PhylomeDB" id="O95801"/>
<dbReference type="TreeFam" id="TF314657"/>
<dbReference type="PathwayCommons" id="O95801"/>
<dbReference type="SignaLink" id="O95801"/>
<dbReference type="BioGRID-ORCS" id="7268">
    <property type="hits" value="492 hits in 1157 CRISPR screens"/>
</dbReference>
<dbReference type="GeneWiki" id="TTC4"/>
<dbReference type="GenomeRNAi" id="7268"/>
<dbReference type="Pharos" id="O95801">
    <property type="development level" value="Tbio"/>
</dbReference>
<dbReference type="PRO" id="PR:O95801"/>
<dbReference type="Proteomes" id="UP000005640">
    <property type="component" value="Chromosome 1"/>
</dbReference>
<dbReference type="RNAct" id="O95801">
    <property type="molecule type" value="protein"/>
</dbReference>
<dbReference type="Bgee" id="ENSG00000243725">
    <property type="expression patterns" value="Expressed in gastrocnemius and 100 other cell types or tissues"/>
</dbReference>
<dbReference type="GO" id="GO:0005737">
    <property type="term" value="C:cytoplasm"/>
    <property type="evidence" value="ECO:0000314"/>
    <property type="project" value="UniProtKB"/>
</dbReference>
<dbReference type="GO" id="GO:0005654">
    <property type="term" value="C:nucleoplasm"/>
    <property type="evidence" value="ECO:0007669"/>
    <property type="project" value="UniProtKB-SubCell"/>
</dbReference>
<dbReference type="GO" id="GO:0005634">
    <property type="term" value="C:nucleus"/>
    <property type="evidence" value="ECO:0000314"/>
    <property type="project" value="UniProtKB"/>
</dbReference>
<dbReference type="GO" id="GO:0030544">
    <property type="term" value="F:Hsp70 protein binding"/>
    <property type="evidence" value="ECO:0000318"/>
    <property type="project" value="GO_Central"/>
</dbReference>
<dbReference type="GO" id="GO:0051879">
    <property type="term" value="F:Hsp90 protein binding"/>
    <property type="evidence" value="ECO:0000318"/>
    <property type="project" value="GO_Central"/>
</dbReference>
<dbReference type="GO" id="GO:0051607">
    <property type="term" value="P:defense response to virus"/>
    <property type="evidence" value="ECO:0000315"/>
    <property type="project" value="UniProtKB"/>
</dbReference>
<dbReference type="GO" id="GO:0045087">
    <property type="term" value="P:innate immune response"/>
    <property type="evidence" value="ECO:0000315"/>
    <property type="project" value="UniProtKB"/>
</dbReference>
<dbReference type="GO" id="GO:0006457">
    <property type="term" value="P:protein folding"/>
    <property type="evidence" value="ECO:0000318"/>
    <property type="project" value="GO_Central"/>
</dbReference>
<dbReference type="CDD" id="cd21380">
    <property type="entry name" value="CTWD_Cns1"/>
    <property type="match status" value="1"/>
</dbReference>
<dbReference type="Gene3D" id="1.25.40.10">
    <property type="entry name" value="Tetratricopeptide repeat domain"/>
    <property type="match status" value="1"/>
</dbReference>
<dbReference type="InterPro" id="IPR044059">
    <property type="entry name" value="Csn1/TTC4_wheel"/>
</dbReference>
<dbReference type="InterPro" id="IPR011990">
    <property type="entry name" value="TPR-like_helical_dom_sf"/>
</dbReference>
<dbReference type="InterPro" id="IPR019734">
    <property type="entry name" value="TPR_rpt"/>
</dbReference>
<dbReference type="PANTHER" id="PTHR46035">
    <property type="entry name" value="TETRATRICOPEPTIDE REPEAT PROTEIN 4"/>
    <property type="match status" value="1"/>
</dbReference>
<dbReference type="PANTHER" id="PTHR46035:SF4">
    <property type="entry name" value="TETRATRICOPEPTIDE REPEAT PROTEIN 4"/>
    <property type="match status" value="1"/>
</dbReference>
<dbReference type="Pfam" id="PF18972">
    <property type="entry name" value="Wheel"/>
    <property type="match status" value="1"/>
</dbReference>
<dbReference type="SMART" id="SM00028">
    <property type="entry name" value="TPR"/>
    <property type="match status" value="3"/>
</dbReference>
<dbReference type="SUPFAM" id="SSF48452">
    <property type="entry name" value="TPR-like"/>
    <property type="match status" value="1"/>
</dbReference>
<dbReference type="PROSITE" id="PS50293">
    <property type="entry name" value="TPR_REGION"/>
    <property type="match status" value="1"/>
</dbReference>
<name>TTC4_HUMAN</name>
<proteinExistence type="evidence at protein level"/>
<reference key="1">
    <citation type="journal article" date="1999" name="Genomics">
        <title>TTC4, a novel human gene containing the tetratricopeptide repeat and mapping to the region of chromosome 1p31 that is frequently deleted in sporadic breast cancer.</title>
        <authorList>
            <person name="Su G."/>
            <person name="Roberts T."/>
            <person name="Cowell J.K."/>
        </authorList>
    </citation>
    <scope>NUCLEOTIDE SEQUENCE [MRNA]</scope>
    <source>
        <tissue>Brain</tissue>
    </source>
</reference>
<reference key="2">
    <citation type="submission" date="1998-05" db="EMBL/GenBank/DDBJ databases">
        <authorList>
            <person name="Mao Y.M."/>
            <person name="Xie Y."/>
            <person name="Zheng Z.H."/>
        </authorList>
    </citation>
    <scope>NUCLEOTIDE SEQUENCE [LARGE SCALE MRNA]</scope>
    <scope>VARIANT THR-47</scope>
    <source>
        <tissue>Fetal brain</tissue>
    </source>
</reference>
<reference key="3">
    <citation type="journal article" date="2004" name="Nat. Genet.">
        <title>Complete sequencing and characterization of 21,243 full-length human cDNAs.</title>
        <authorList>
            <person name="Ota T."/>
            <person name="Suzuki Y."/>
            <person name="Nishikawa T."/>
            <person name="Otsuki T."/>
            <person name="Sugiyama T."/>
            <person name="Irie R."/>
            <person name="Wakamatsu A."/>
            <person name="Hayashi K."/>
            <person name="Sato H."/>
            <person name="Nagai K."/>
            <person name="Kimura K."/>
            <person name="Makita H."/>
            <person name="Sekine M."/>
            <person name="Obayashi M."/>
            <person name="Nishi T."/>
            <person name="Shibahara T."/>
            <person name="Tanaka T."/>
            <person name="Ishii S."/>
            <person name="Yamamoto J."/>
            <person name="Saito K."/>
            <person name="Kawai Y."/>
            <person name="Isono Y."/>
            <person name="Nakamura Y."/>
            <person name="Nagahari K."/>
            <person name="Murakami K."/>
            <person name="Yasuda T."/>
            <person name="Iwayanagi T."/>
            <person name="Wagatsuma M."/>
            <person name="Shiratori A."/>
            <person name="Sudo H."/>
            <person name="Hosoiri T."/>
            <person name="Kaku Y."/>
            <person name="Kodaira H."/>
            <person name="Kondo H."/>
            <person name="Sugawara M."/>
            <person name="Takahashi M."/>
            <person name="Kanda K."/>
            <person name="Yokoi T."/>
            <person name="Furuya T."/>
            <person name="Kikkawa E."/>
            <person name="Omura Y."/>
            <person name="Abe K."/>
            <person name="Kamihara K."/>
            <person name="Katsuta N."/>
            <person name="Sato K."/>
            <person name="Tanikawa M."/>
            <person name="Yamazaki M."/>
            <person name="Ninomiya K."/>
            <person name="Ishibashi T."/>
            <person name="Yamashita H."/>
            <person name="Murakawa K."/>
            <person name="Fujimori K."/>
            <person name="Tanai H."/>
            <person name="Kimata M."/>
            <person name="Watanabe M."/>
            <person name="Hiraoka S."/>
            <person name="Chiba Y."/>
            <person name="Ishida S."/>
            <person name="Ono Y."/>
            <person name="Takiguchi S."/>
            <person name="Watanabe S."/>
            <person name="Yosida M."/>
            <person name="Hotuta T."/>
            <person name="Kusano J."/>
            <person name="Kanehori K."/>
            <person name="Takahashi-Fujii A."/>
            <person name="Hara H."/>
            <person name="Tanase T.-O."/>
            <person name="Nomura Y."/>
            <person name="Togiya S."/>
            <person name="Komai F."/>
            <person name="Hara R."/>
            <person name="Takeuchi K."/>
            <person name="Arita M."/>
            <person name="Imose N."/>
            <person name="Musashino K."/>
            <person name="Yuuki H."/>
            <person name="Oshima A."/>
            <person name="Sasaki N."/>
            <person name="Aotsuka S."/>
            <person name="Yoshikawa Y."/>
            <person name="Matsunawa H."/>
            <person name="Ichihara T."/>
            <person name="Shiohata N."/>
            <person name="Sano S."/>
            <person name="Moriya S."/>
            <person name="Momiyama H."/>
            <person name="Satoh N."/>
            <person name="Takami S."/>
            <person name="Terashima Y."/>
            <person name="Suzuki O."/>
            <person name="Nakagawa S."/>
            <person name="Senoh A."/>
            <person name="Mizoguchi H."/>
            <person name="Goto Y."/>
            <person name="Shimizu F."/>
            <person name="Wakebe H."/>
            <person name="Hishigaki H."/>
            <person name="Watanabe T."/>
            <person name="Sugiyama A."/>
            <person name="Takemoto M."/>
            <person name="Kawakami B."/>
            <person name="Yamazaki M."/>
            <person name="Watanabe K."/>
            <person name="Kumagai A."/>
            <person name="Itakura S."/>
            <person name="Fukuzumi Y."/>
            <person name="Fujimori Y."/>
            <person name="Komiyama M."/>
            <person name="Tashiro H."/>
            <person name="Tanigami A."/>
            <person name="Fujiwara T."/>
            <person name="Ono T."/>
            <person name="Yamada K."/>
            <person name="Fujii Y."/>
            <person name="Ozaki K."/>
            <person name="Hirao M."/>
            <person name="Ohmori Y."/>
            <person name="Kawabata A."/>
            <person name="Hikiji T."/>
            <person name="Kobatake N."/>
            <person name="Inagaki H."/>
            <person name="Ikema Y."/>
            <person name="Okamoto S."/>
            <person name="Okitani R."/>
            <person name="Kawakami T."/>
            <person name="Noguchi S."/>
            <person name="Itoh T."/>
            <person name="Shigeta K."/>
            <person name="Senba T."/>
            <person name="Matsumura K."/>
            <person name="Nakajima Y."/>
            <person name="Mizuno T."/>
            <person name="Morinaga M."/>
            <person name="Sasaki M."/>
            <person name="Togashi T."/>
            <person name="Oyama M."/>
            <person name="Hata H."/>
            <person name="Watanabe M."/>
            <person name="Komatsu T."/>
            <person name="Mizushima-Sugano J."/>
            <person name="Satoh T."/>
            <person name="Shirai Y."/>
            <person name="Takahashi Y."/>
            <person name="Nakagawa K."/>
            <person name="Okumura K."/>
            <person name="Nagase T."/>
            <person name="Nomura N."/>
            <person name="Kikuchi H."/>
            <person name="Masuho Y."/>
            <person name="Yamashita R."/>
            <person name="Nakai K."/>
            <person name="Yada T."/>
            <person name="Nakamura Y."/>
            <person name="Ohara O."/>
            <person name="Isogai T."/>
            <person name="Sugano S."/>
        </authorList>
    </citation>
    <scope>NUCLEOTIDE SEQUENCE [LARGE SCALE MRNA]</scope>
    <scope>VARIANT THR-47</scope>
    <source>
        <tissue>Testis</tissue>
    </source>
</reference>
<reference key="4">
    <citation type="submission" date="2003-05" db="EMBL/GenBank/DDBJ databases">
        <title>Cloning of human full-length CDSs in BD Creator(TM) system donor vector.</title>
        <authorList>
            <person name="Kalnine N."/>
            <person name="Chen X."/>
            <person name="Rolfs A."/>
            <person name="Halleck A."/>
            <person name="Hines L."/>
            <person name="Eisenstein S."/>
            <person name="Koundinya M."/>
            <person name="Raphael J."/>
            <person name="Moreira D."/>
            <person name="Kelley T."/>
            <person name="LaBaer J."/>
            <person name="Lin Y."/>
            <person name="Phelan M."/>
            <person name="Farmer A."/>
        </authorList>
    </citation>
    <scope>NUCLEOTIDE SEQUENCE [LARGE SCALE MRNA]</scope>
    <scope>VARIANT THR-47</scope>
</reference>
<reference key="5">
    <citation type="submission" date="2005-04" db="EMBL/GenBank/DDBJ databases">
        <authorList>
            <person name="Suzuki Y."/>
            <person name="Sugano S."/>
            <person name="Totoki Y."/>
            <person name="Toyoda A."/>
            <person name="Takeda T."/>
            <person name="Sakaki Y."/>
            <person name="Tanaka A."/>
            <person name="Yokoyama S."/>
        </authorList>
    </citation>
    <scope>NUCLEOTIDE SEQUENCE [LARGE SCALE MRNA]</scope>
    <source>
        <tissue>Coronary artery</tissue>
    </source>
</reference>
<reference key="6">
    <citation type="journal article" date="2006" name="Nature">
        <title>The DNA sequence and biological annotation of human chromosome 1.</title>
        <authorList>
            <person name="Gregory S.G."/>
            <person name="Barlow K.F."/>
            <person name="McLay K.E."/>
            <person name="Kaul R."/>
            <person name="Swarbreck D."/>
            <person name="Dunham A."/>
            <person name="Scott C.E."/>
            <person name="Howe K.L."/>
            <person name="Woodfine K."/>
            <person name="Spencer C.C.A."/>
            <person name="Jones M.C."/>
            <person name="Gillson C."/>
            <person name="Searle S."/>
            <person name="Zhou Y."/>
            <person name="Kokocinski F."/>
            <person name="McDonald L."/>
            <person name="Evans R."/>
            <person name="Phillips K."/>
            <person name="Atkinson A."/>
            <person name="Cooper R."/>
            <person name="Jones C."/>
            <person name="Hall R.E."/>
            <person name="Andrews T.D."/>
            <person name="Lloyd C."/>
            <person name="Ainscough R."/>
            <person name="Almeida J.P."/>
            <person name="Ambrose K.D."/>
            <person name="Anderson F."/>
            <person name="Andrew R.W."/>
            <person name="Ashwell R.I.S."/>
            <person name="Aubin K."/>
            <person name="Babbage A.K."/>
            <person name="Bagguley C.L."/>
            <person name="Bailey J."/>
            <person name="Beasley H."/>
            <person name="Bethel G."/>
            <person name="Bird C.P."/>
            <person name="Bray-Allen S."/>
            <person name="Brown J.Y."/>
            <person name="Brown A.J."/>
            <person name="Buckley D."/>
            <person name="Burton J."/>
            <person name="Bye J."/>
            <person name="Carder C."/>
            <person name="Chapman J.C."/>
            <person name="Clark S.Y."/>
            <person name="Clarke G."/>
            <person name="Clee C."/>
            <person name="Cobley V."/>
            <person name="Collier R.E."/>
            <person name="Corby N."/>
            <person name="Coville G.J."/>
            <person name="Davies J."/>
            <person name="Deadman R."/>
            <person name="Dunn M."/>
            <person name="Earthrowl M."/>
            <person name="Ellington A.G."/>
            <person name="Errington H."/>
            <person name="Frankish A."/>
            <person name="Frankland J."/>
            <person name="French L."/>
            <person name="Garner P."/>
            <person name="Garnett J."/>
            <person name="Gay L."/>
            <person name="Ghori M.R.J."/>
            <person name="Gibson R."/>
            <person name="Gilby L.M."/>
            <person name="Gillett W."/>
            <person name="Glithero R.J."/>
            <person name="Grafham D.V."/>
            <person name="Griffiths C."/>
            <person name="Griffiths-Jones S."/>
            <person name="Grocock R."/>
            <person name="Hammond S."/>
            <person name="Harrison E.S.I."/>
            <person name="Hart E."/>
            <person name="Haugen E."/>
            <person name="Heath P.D."/>
            <person name="Holmes S."/>
            <person name="Holt K."/>
            <person name="Howden P.J."/>
            <person name="Hunt A.R."/>
            <person name="Hunt S.E."/>
            <person name="Hunter G."/>
            <person name="Isherwood J."/>
            <person name="James R."/>
            <person name="Johnson C."/>
            <person name="Johnson D."/>
            <person name="Joy A."/>
            <person name="Kay M."/>
            <person name="Kershaw J.K."/>
            <person name="Kibukawa M."/>
            <person name="Kimberley A.M."/>
            <person name="King A."/>
            <person name="Knights A.J."/>
            <person name="Lad H."/>
            <person name="Laird G."/>
            <person name="Lawlor S."/>
            <person name="Leongamornlert D.A."/>
            <person name="Lloyd D.M."/>
            <person name="Loveland J."/>
            <person name="Lovell J."/>
            <person name="Lush M.J."/>
            <person name="Lyne R."/>
            <person name="Martin S."/>
            <person name="Mashreghi-Mohammadi M."/>
            <person name="Matthews L."/>
            <person name="Matthews N.S.W."/>
            <person name="McLaren S."/>
            <person name="Milne S."/>
            <person name="Mistry S."/>
            <person name="Moore M.J.F."/>
            <person name="Nickerson T."/>
            <person name="O'Dell C.N."/>
            <person name="Oliver K."/>
            <person name="Palmeiri A."/>
            <person name="Palmer S.A."/>
            <person name="Parker A."/>
            <person name="Patel D."/>
            <person name="Pearce A.V."/>
            <person name="Peck A.I."/>
            <person name="Pelan S."/>
            <person name="Phelps K."/>
            <person name="Phillimore B.J."/>
            <person name="Plumb R."/>
            <person name="Rajan J."/>
            <person name="Raymond C."/>
            <person name="Rouse G."/>
            <person name="Saenphimmachak C."/>
            <person name="Sehra H.K."/>
            <person name="Sheridan E."/>
            <person name="Shownkeen R."/>
            <person name="Sims S."/>
            <person name="Skuce C.D."/>
            <person name="Smith M."/>
            <person name="Steward C."/>
            <person name="Subramanian S."/>
            <person name="Sycamore N."/>
            <person name="Tracey A."/>
            <person name="Tromans A."/>
            <person name="Van Helmond Z."/>
            <person name="Wall M."/>
            <person name="Wallis J.M."/>
            <person name="White S."/>
            <person name="Whitehead S.L."/>
            <person name="Wilkinson J.E."/>
            <person name="Willey D.L."/>
            <person name="Williams H."/>
            <person name="Wilming L."/>
            <person name="Wray P.W."/>
            <person name="Wu Z."/>
            <person name="Coulson A."/>
            <person name="Vaudin M."/>
            <person name="Sulston J.E."/>
            <person name="Durbin R.M."/>
            <person name="Hubbard T."/>
            <person name="Wooster R."/>
            <person name="Dunham I."/>
            <person name="Carter N.P."/>
            <person name="McVean G."/>
            <person name="Ross M.T."/>
            <person name="Harrow J."/>
            <person name="Olson M.V."/>
            <person name="Beck S."/>
            <person name="Rogers J."/>
            <person name="Bentley D.R."/>
        </authorList>
    </citation>
    <scope>NUCLEOTIDE SEQUENCE [LARGE SCALE GENOMIC DNA]</scope>
</reference>
<reference key="7">
    <citation type="submission" date="2005-09" db="EMBL/GenBank/DDBJ databases">
        <authorList>
            <person name="Mural R.J."/>
            <person name="Istrail S."/>
            <person name="Sutton G.G."/>
            <person name="Florea L."/>
            <person name="Halpern A.L."/>
            <person name="Mobarry C.M."/>
            <person name="Lippert R."/>
            <person name="Walenz B."/>
            <person name="Shatkay H."/>
            <person name="Dew I."/>
            <person name="Miller J.R."/>
            <person name="Flanigan M.J."/>
            <person name="Edwards N.J."/>
            <person name="Bolanos R."/>
            <person name="Fasulo D."/>
            <person name="Halldorsson B.V."/>
            <person name="Hannenhalli S."/>
            <person name="Turner R."/>
            <person name="Yooseph S."/>
            <person name="Lu F."/>
            <person name="Nusskern D.R."/>
            <person name="Shue B.C."/>
            <person name="Zheng X.H."/>
            <person name="Zhong F."/>
            <person name="Delcher A.L."/>
            <person name="Huson D.H."/>
            <person name="Kravitz S.A."/>
            <person name="Mouchard L."/>
            <person name="Reinert K."/>
            <person name="Remington K.A."/>
            <person name="Clark A.G."/>
            <person name="Waterman M.S."/>
            <person name="Eichler E.E."/>
            <person name="Adams M.D."/>
            <person name="Hunkapiller M.W."/>
            <person name="Myers E.W."/>
            <person name="Venter J.C."/>
        </authorList>
    </citation>
    <scope>NUCLEOTIDE SEQUENCE [LARGE SCALE GENOMIC DNA]</scope>
</reference>
<reference key="8">
    <citation type="journal article" date="2004" name="Genome Res.">
        <title>The status, quality, and expansion of the NIH full-length cDNA project: the Mammalian Gene Collection (MGC).</title>
        <authorList>
            <consortium name="The MGC Project Team"/>
        </authorList>
    </citation>
    <scope>NUCLEOTIDE SEQUENCE [LARGE SCALE MRNA]</scope>
    <scope>VARIANT THR-47</scope>
    <source>
        <tissue>Cervix</tissue>
    </source>
</reference>
<reference key="9">
    <citation type="journal article" date="2008" name="PLoS ONE">
        <title>The human TPR protein TTC4 is a putative Hsp90 co-chaperone which interacts with CDC6 and shows alterations in transformed cells.</title>
        <authorList>
            <person name="Crevel G."/>
            <person name="Bennett D."/>
            <person name="Cotterill S."/>
        </authorList>
    </citation>
    <scope>FUNCTION</scope>
    <scope>INTERACTION WITH HSPA8; HSP90AB1 AND CDC6</scope>
    <scope>SUBCELLULAR LOCATION</scope>
    <scope>MUTAGENESIS OF VAL-42; ILE-67; GLU-77; LYS-152; ARG-156 AND ASN-217</scope>
    <scope>TISSUE SPECIFICITY</scope>
</reference>
<reference key="10">
    <citation type="journal article" date="2008" name="Proc. Natl. Acad. Sci. U.S.A.">
        <title>A quantitative atlas of mitotic phosphorylation.</title>
        <authorList>
            <person name="Dephoure N."/>
            <person name="Zhou C."/>
            <person name="Villen J."/>
            <person name="Beausoleil S.A."/>
            <person name="Bakalarski C.E."/>
            <person name="Elledge S.J."/>
            <person name="Gygi S.P."/>
        </authorList>
    </citation>
    <scope>PHOSPHORYLATION [LARGE SCALE ANALYSIS] AT SER-243</scope>
    <scope>IDENTIFICATION BY MASS SPECTROMETRY [LARGE SCALE ANALYSIS]</scope>
    <source>
        <tissue>Cervix carcinoma</tissue>
    </source>
</reference>
<reference key="11">
    <citation type="journal article" date="2009" name="Anal. Chem.">
        <title>Lys-N and trypsin cover complementary parts of the phosphoproteome in a refined SCX-based approach.</title>
        <authorList>
            <person name="Gauci S."/>
            <person name="Helbig A.O."/>
            <person name="Slijper M."/>
            <person name="Krijgsveld J."/>
            <person name="Heck A.J."/>
            <person name="Mohammed S."/>
        </authorList>
    </citation>
    <scope>ACETYLATION [LARGE SCALE ANALYSIS] AT MET-1</scope>
    <scope>IDENTIFICATION BY MASS SPECTROMETRY [LARGE SCALE ANALYSIS]</scope>
</reference>
<reference key="12">
    <citation type="journal article" date="2011" name="BMC Syst. Biol.">
        <title>Initial characterization of the human central proteome.</title>
        <authorList>
            <person name="Burkard T.R."/>
            <person name="Planyavsky M."/>
            <person name="Kaupe I."/>
            <person name="Breitwieser F.P."/>
            <person name="Buerckstuemmer T."/>
            <person name="Bennett K.L."/>
            <person name="Superti-Furga G."/>
            <person name="Colinge J."/>
        </authorList>
    </citation>
    <scope>IDENTIFICATION BY MASS SPECTROMETRY [LARGE SCALE ANALYSIS]</scope>
</reference>
<reference key="13">
    <citation type="journal article" date="2013" name="J. Proteome Res.">
        <title>Toward a comprehensive characterization of a human cancer cell phosphoproteome.</title>
        <authorList>
            <person name="Zhou H."/>
            <person name="Di Palma S."/>
            <person name="Preisinger C."/>
            <person name="Peng M."/>
            <person name="Polat A.N."/>
            <person name="Heck A.J."/>
            <person name="Mohammed S."/>
        </authorList>
    </citation>
    <scope>PHOSPHORYLATION [LARGE SCALE ANALYSIS] AT SER-47 AND SER-51</scope>
    <scope>IDENTIFICATION BY MASS SPECTROMETRY [LARGE SCALE ANALYSIS]</scope>
    <source>
        <tissue>Erythroleukemia</tissue>
    </source>
</reference>
<reference key="14">
    <citation type="journal article" date="2018" name="Proteomics">
        <title>Quantitative Proteomics Identified TTC4 as a TBK1 Interactor and a Positive Regulator of SeV-Induced Innate Immunity.</title>
        <authorList>
            <person name="Shang J."/>
            <person name="Xia T."/>
            <person name="Han Q.Q."/>
            <person name="Zhao X."/>
            <person name="Hu M.M."/>
            <person name="Shu H.B."/>
            <person name="Guo L."/>
        </authorList>
    </citation>
    <scope>FUNCTION</scope>
    <scope>SUBCELLULAR LOCATION</scope>
    <scope>INTERACTION WITH TBK1</scope>
</reference>
<sequence length="387" mass="44679">MEQPGQDPTSDDVMDSFLEKFQSQPYRGGFHEDQWEKEFEKVPLFMSRAPSEIDPRENPDLACLQSIIFDEERSPEEQAKTYKDEGNDYFKEKDYKKAVISYTEGLKKKCADPDLNAVLYTNRAAAQYYLGNFRSALNDVTAARKLKPCHLKAIIRGALCHLELKHFAEAVNWCDEGLQIDAKEKKLLEMRAKADKLKRIEQRDVRKANLKEKKERNQNEALLQAIKARNIRLSEAACEDEDSASEGLGELFLDGLSTENPHGARLSLDGQGRLSWPVLFLYPEYAQSDFISAFHEDSRFIDHLMVMFGETPSWDLEQKYCPDNLEVYFEDEDRAELYRVPAKSTLLQVLQHQRYFVKALTPAFLVCVGSSPFCKNFLRGRKVYQIR</sequence>